<keyword id="KW-0240">DNA-directed RNA polymerase</keyword>
<keyword id="KW-0548">Nucleotidyltransferase</keyword>
<keyword id="KW-1185">Reference proteome</keyword>
<keyword id="KW-0804">Transcription</keyword>
<keyword id="KW-0808">Transferase</keyword>
<accession>A8AZJ9</accession>
<comment type="function">
    <text evidence="1">DNA-dependent RNA polymerase catalyzes the transcription of DNA into RNA using the four ribonucleoside triphosphates as substrates.</text>
</comment>
<comment type="catalytic activity">
    <reaction evidence="1">
        <text>RNA(n) + a ribonucleoside 5'-triphosphate = RNA(n+1) + diphosphate</text>
        <dbReference type="Rhea" id="RHEA:21248"/>
        <dbReference type="Rhea" id="RHEA-COMP:14527"/>
        <dbReference type="Rhea" id="RHEA-COMP:17342"/>
        <dbReference type="ChEBI" id="CHEBI:33019"/>
        <dbReference type="ChEBI" id="CHEBI:61557"/>
        <dbReference type="ChEBI" id="CHEBI:140395"/>
        <dbReference type="EC" id="2.7.7.6"/>
    </reaction>
</comment>
<comment type="subunit">
    <text evidence="1">Homodimer. The RNAP catalytic core consists of 2 alpha, 1 beta, 1 beta' and 1 omega subunit. When a sigma factor is associated with the core the holoenzyme is formed, which can initiate transcription.</text>
</comment>
<comment type="domain">
    <text evidence="1">The N-terminal domain is essential for RNAP assembly and basal transcription, whereas the C-terminal domain is involved in interaction with transcriptional regulators and with upstream promoter elements.</text>
</comment>
<comment type="similarity">
    <text evidence="1">Belongs to the RNA polymerase alpha chain family.</text>
</comment>
<gene>
    <name evidence="1" type="primary">rpoA</name>
    <name type="ordered locus">SGO_1959</name>
</gene>
<proteinExistence type="inferred from homology"/>
<feature type="chain" id="PRO_0000323657" description="DNA-directed RNA polymerase subunit alpha">
    <location>
        <begin position="1"/>
        <end position="312"/>
    </location>
</feature>
<feature type="region of interest" description="Alpha N-terminal domain (alpha-NTD)" evidence="1">
    <location>
        <begin position="1"/>
        <end position="226"/>
    </location>
</feature>
<feature type="region of interest" description="Alpha C-terminal domain (alpha-CTD)" evidence="1">
    <location>
        <begin position="244"/>
        <end position="312"/>
    </location>
</feature>
<protein>
    <recommendedName>
        <fullName evidence="1">DNA-directed RNA polymerase subunit alpha</fullName>
        <shortName evidence="1">RNAP subunit alpha</shortName>
        <ecNumber evidence="1">2.7.7.6</ecNumber>
    </recommendedName>
    <alternativeName>
        <fullName evidence="1">RNA polymerase subunit alpha</fullName>
    </alternativeName>
    <alternativeName>
        <fullName evidence="1">Transcriptase subunit alpha</fullName>
    </alternativeName>
</protein>
<evidence type="ECO:0000255" key="1">
    <source>
        <dbReference type="HAMAP-Rule" id="MF_00059"/>
    </source>
</evidence>
<sequence>MIEFEKPNITKIDENKDYGKFVVEPLERGYGTTLGNSLRRVLLASLPGAAVTSINIEGVLHEFDTIPGVREDVMQIILNIKGIAVKSYVQDEKMIELDVEGPAEITAGDILTDSDIEIVNPDHYLFTIGEGARFKAVMTVNSGRGYVPADQNKRDDAPVGTLAVDSIYTPVTKVNYQVEPARVGSNDGFDKLTLEIMTNGTIIPEDALGLSARILTEHLDLFTDLTEVAKATDVMKEVDKSSDDHVLERTIEELDLSVRSYNCLKRAGINTVYDLTEKTEPEMMKVRNLGRKSLEEVKIKLTDLGLGLKNDK</sequence>
<organism>
    <name type="scientific">Streptococcus gordonii (strain Challis / ATCC 35105 / BCRC 15272 / CH1 / DL1 / V288)</name>
    <dbReference type="NCBI Taxonomy" id="467705"/>
    <lineage>
        <taxon>Bacteria</taxon>
        <taxon>Bacillati</taxon>
        <taxon>Bacillota</taxon>
        <taxon>Bacilli</taxon>
        <taxon>Lactobacillales</taxon>
        <taxon>Streptococcaceae</taxon>
        <taxon>Streptococcus</taxon>
    </lineage>
</organism>
<reference key="1">
    <citation type="journal article" date="2007" name="J. Bacteriol.">
        <title>Genome-wide transcriptional changes in Streptococcus gordonii in response to competence signaling peptide.</title>
        <authorList>
            <person name="Vickerman M.M."/>
            <person name="Iobst S."/>
            <person name="Jesionowski A.M."/>
            <person name="Gill S.R."/>
        </authorList>
    </citation>
    <scope>NUCLEOTIDE SEQUENCE [LARGE SCALE GENOMIC DNA]</scope>
    <source>
        <strain>Challis / ATCC 35105 / BCRC 15272 / CH1 / DL1 / V288</strain>
    </source>
</reference>
<name>RPOA_STRGC</name>
<dbReference type="EC" id="2.7.7.6" evidence="1"/>
<dbReference type="EMBL" id="CP000725">
    <property type="protein sequence ID" value="ABV10361.1"/>
    <property type="molecule type" value="Genomic_DNA"/>
</dbReference>
<dbReference type="RefSeq" id="WP_012130959.1">
    <property type="nucleotide sequence ID" value="NC_009785.1"/>
</dbReference>
<dbReference type="SMR" id="A8AZJ9"/>
<dbReference type="STRING" id="467705.SGO_1959"/>
<dbReference type="KEGG" id="sgo:SGO_1959"/>
<dbReference type="eggNOG" id="COG0202">
    <property type="taxonomic scope" value="Bacteria"/>
</dbReference>
<dbReference type="HOGENOM" id="CLU_053084_0_1_9"/>
<dbReference type="Proteomes" id="UP000001131">
    <property type="component" value="Chromosome"/>
</dbReference>
<dbReference type="GO" id="GO:0005737">
    <property type="term" value="C:cytoplasm"/>
    <property type="evidence" value="ECO:0007669"/>
    <property type="project" value="UniProtKB-ARBA"/>
</dbReference>
<dbReference type="GO" id="GO:0000428">
    <property type="term" value="C:DNA-directed RNA polymerase complex"/>
    <property type="evidence" value="ECO:0007669"/>
    <property type="project" value="UniProtKB-KW"/>
</dbReference>
<dbReference type="GO" id="GO:0003677">
    <property type="term" value="F:DNA binding"/>
    <property type="evidence" value="ECO:0007669"/>
    <property type="project" value="UniProtKB-UniRule"/>
</dbReference>
<dbReference type="GO" id="GO:0003899">
    <property type="term" value="F:DNA-directed RNA polymerase activity"/>
    <property type="evidence" value="ECO:0007669"/>
    <property type="project" value="UniProtKB-UniRule"/>
</dbReference>
<dbReference type="GO" id="GO:0046983">
    <property type="term" value="F:protein dimerization activity"/>
    <property type="evidence" value="ECO:0007669"/>
    <property type="project" value="InterPro"/>
</dbReference>
<dbReference type="GO" id="GO:0006351">
    <property type="term" value="P:DNA-templated transcription"/>
    <property type="evidence" value="ECO:0007669"/>
    <property type="project" value="UniProtKB-UniRule"/>
</dbReference>
<dbReference type="CDD" id="cd06928">
    <property type="entry name" value="RNAP_alpha_NTD"/>
    <property type="match status" value="1"/>
</dbReference>
<dbReference type="FunFam" id="1.10.150.20:FF:000001">
    <property type="entry name" value="DNA-directed RNA polymerase subunit alpha"/>
    <property type="match status" value="1"/>
</dbReference>
<dbReference type="FunFam" id="2.170.120.12:FF:000001">
    <property type="entry name" value="DNA-directed RNA polymerase subunit alpha"/>
    <property type="match status" value="1"/>
</dbReference>
<dbReference type="Gene3D" id="1.10.150.20">
    <property type="entry name" value="5' to 3' exonuclease, C-terminal subdomain"/>
    <property type="match status" value="1"/>
</dbReference>
<dbReference type="Gene3D" id="2.170.120.12">
    <property type="entry name" value="DNA-directed RNA polymerase, insert domain"/>
    <property type="match status" value="1"/>
</dbReference>
<dbReference type="Gene3D" id="3.30.1360.10">
    <property type="entry name" value="RNA polymerase, RBP11-like subunit"/>
    <property type="match status" value="1"/>
</dbReference>
<dbReference type="HAMAP" id="MF_00059">
    <property type="entry name" value="RNApol_bact_RpoA"/>
    <property type="match status" value="1"/>
</dbReference>
<dbReference type="InterPro" id="IPR011262">
    <property type="entry name" value="DNA-dir_RNA_pol_insert"/>
</dbReference>
<dbReference type="InterPro" id="IPR011263">
    <property type="entry name" value="DNA-dir_RNA_pol_RpoA/D/Rpb3"/>
</dbReference>
<dbReference type="InterPro" id="IPR011773">
    <property type="entry name" value="DNA-dir_RpoA"/>
</dbReference>
<dbReference type="InterPro" id="IPR036603">
    <property type="entry name" value="RBP11-like"/>
</dbReference>
<dbReference type="InterPro" id="IPR011260">
    <property type="entry name" value="RNAP_asu_C"/>
</dbReference>
<dbReference type="InterPro" id="IPR036643">
    <property type="entry name" value="RNApol_insert_sf"/>
</dbReference>
<dbReference type="NCBIfam" id="NF003513">
    <property type="entry name" value="PRK05182.1-2"/>
    <property type="match status" value="1"/>
</dbReference>
<dbReference type="NCBIfam" id="NF003515">
    <property type="entry name" value="PRK05182.2-1"/>
    <property type="match status" value="1"/>
</dbReference>
<dbReference type="NCBIfam" id="NF003518">
    <property type="entry name" value="PRK05182.2-4"/>
    <property type="match status" value="1"/>
</dbReference>
<dbReference type="NCBIfam" id="NF003519">
    <property type="entry name" value="PRK05182.2-5"/>
    <property type="match status" value="1"/>
</dbReference>
<dbReference type="NCBIfam" id="TIGR02027">
    <property type="entry name" value="rpoA"/>
    <property type="match status" value="1"/>
</dbReference>
<dbReference type="Pfam" id="PF01000">
    <property type="entry name" value="RNA_pol_A_bac"/>
    <property type="match status" value="1"/>
</dbReference>
<dbReference type="Pfam" id="PF03118">
    <property type="entry name" value="RNA_pol_A_CTD"/>
    <property type="match status" value="1"/>
</dbReference>
<dbReference type="Pfam" id="PF01193">
    <property type="entry name" value="RNA_pol_L"/>
    <property type="match status" value="1"/>
</dbReference>
<dbReference type="SMART" id="SM00662">
    <property type="entry name" value="RPOLD"/>
    <property type="match status" value="1"/>
</dbReference>
<dbReference type="SUPFAM" id="SSF47789">
    <property type="entry name" value="C-terminal domain of RNA polymerase alpha subunit"/>
    <property type="match status" value="1"/>
</dbReference>
<dbReference type="SUPFAM" id="SSF56553">
    <property type="entry name" value="Insert subdomain of RNA polymerase alpha subunit"/>
    <property type="match status" value="1"/>
</dbReference>
<dbReference type="SUPFAM" id="SSF55257">
    <property type="entry name" value="RBP11-like subunits of RNA polymerase"/>
    <property type="match status" value="1"/>
</dbReference>